<protein>
    <recommendedName>
        <fullName evidence="1">Large ribosomal subunit protein bL36</fullName>
    </recommendedName>
    <alternativeName>
        <fullName evidence="2">50S ribosomal protein L36</fullName>
    </alternativeName>
</protein>
<gene>
    <name evidence="1" type="primary">rpmJ</name>
    <name type="ordered locus">PG_1915</name>
</gene>
<feature type="chain" id="PRO_0000126234" description="Large ribosomal subunit protein bL36">
    <location>
        <begin position="1"/>
        <end position="38"/>
    </location>
</feature>
<reference key="1">
    <citation type="journal article" date="2003" name="J. Bacteriol.">
        <title>Complete genome sequence of the oral pathogenic bacterium Porphyromonas gingivalis strain W83.</title>
        <authorList>
            <person name="Nelson K.E."/>
            <person name="Fleischmann R.D."/>
            <person name="DeBoy R.T."/>
            <person name="Paulsen I.T."/>
            <person name="Fouts D.E."/>
            <person name="Eisen J.A."/>
            <person name="Daugherty S.C."/>
            <person name="Dodson R.J."/>
            <person name="Durkin A.S."/>
            <person name="Gwinn M.L."/>
            <person name="Haft D.H."/>
            <person name="Kolonay J.F."/>
            <person name="Nelson W.C."/>
            <person name="Mason T.M."/>
            <person name="Tallon L."/>
            <person name="Gray J."/>
            <person name="Granger D."/>
            <person name="Tettelin H."/>
            <person name="Dong H."/>
            <person name="Galvin J.L."/>
            <person name="Duncan M.J."/>
            <person name="Dewhirst F.E."/>
            <person name="Fraser C.M."/>
        </authorList>
    </citation>
    <scope>NUCLEOTIDE SEQUENCE [LARGE SCALE GENOMIC DNA]</scope>
    <source>
        <strain>ATCC BAA-308 / W83</strain>
    </source>
</reference>
<sequence>MKVRASVKKRTPECKIVRRKGRLYVINKKNPKYKQRQG</sequence>
<comment type="similarity">
    <text evidence="1">Belongs to the bacterial ribosomal protein bL36 family.</text>
</comment>
<dbReference type="EMBL" id="AE015924">
    <property type="protein sequence ID" value="AAQ66896.1"/>
    <property type="molecule type" value="Genomic_DNA"/>
</dbReference>
<dbReference type="RefSeq" id="WP_004583576.1">
    <property type="nucleotide sequence ID" value="NC_002950.2"/>
</dbReference>
<dbReference type="SMR" id="Q7MTN6"/>
<dbReference type="STRING" id="242619.PG_1915"/>
<dbReference type="EnsemblBacteria" id="AAQ66896">
    <property type="protein sequence ID" value="AAQ66896"/>
    <property type="gene ID" value="PG_1915"/>
</dbReference>
<dbReference type="GeneID" id="31477471"/>
<dbReference type="KEGG" id="pgi:PG_1915"/>
<dbReference type="eggNOG" id="COG0257">
    <property type="taxonomic scope" value="Bacteria"/>
</dbReference>
<dbReference type="HOGENOM" id="CLU_135723_3_3_10"/>
<dbReference type="BioCyc" id="PGIN242619:G1G02-1787-MONOMER"/>
<dbReference type="Proteomes" id="UP000000588">
    <property type="component" value="Chromosome"/>
</dbReference>
<dbReference type="GO" id="GO:1990904">
    <property type="term" value="C:ribonucleoprotein complex"/>
    <property type="evidence" value="ECO:0007669"/>
    <property type="project" value="UniProtKB-KW"/>
</dbReference>
<dbReference type="GO" id="GO:0005840">
    <property type="term" value="C:ribosome"/>
    <property type="evidence" value="ECO:0007669"/>
    <property type="project" value="UniProtKB-KW"/>
</dbReference>
<dbReference type="GO" id="GO:0003735">
    <property type="term" value="F:structural constituent of ribosome"/>
    <property type="evidence" value="ECO:0007669"/>
    <property type="project" value="InterPro"/>
</dbReference>
<dbReference type="GO" id="GO:0006412">
    <property type="term" value="P:translation"/>
    <property type="evidence" value="ECO:0007669"/>
    <property type="project" value="UniProtKB-UniRule"/>
</dbReference>
<dbReference type="HAMAP" id="MF_00251">
    <property type="entry name" value="Ribosomal_bL36"/>
    <property type="match status" value="1"/>
</dbReference>
<dbReference type="InterPro" id="IPR000473">
    <property type="entry name" value="Ribosomal_bL36"/>
</dbReference>
<dbReference type="InterPro" id="IPR035977">
    <property type="entry name" value="Ribosomal_bL36_sp"/>
</dbReference>
<dbReference type="InterPro" id="IPR047621">
    <property type="entry name" value="Ribosomal_L36_bact"/>
</dbReference>
<dbReference type="NCBIfam" id="NF002021">
    <property type="entry name" value="PRK00831.1"/>
    <property type="match status" value="1"/>
</dbReference>
<dbReference type="NCBIfam" id="TIGR01022">
    <property type="entry name" value="rpmJ_bact"/>
    <property type="match status" value="1"/>
</dbReference>
<dbReference type="PANTHER" id="PTHR47781">
    <property type="entry name" value="50S RIBOSOMAL PROTEIN L36 2"/>
    <property type="match status" value="1"/>
</dbReference>
<dbReference type="PANTHER" id="PTHR47781:SF1">
    <property type="entry name" value="LARGE RIBOSOMAL SUBUNIT PROTEIN BL36B"/>
    <property type="match status" value="1"/>
</dbReference>
<dbReference type="Pfam" id="PF00444">
    <property type="entry name" value="Ribosomal_L36"/>
    <property type="match status" value="1"/>
</dbReference>
<dbReference type="SUPFAM" id="SSF57840">
    <property type="entry name" value="Ribosomal protein L36"/>
    <property type="match status" value="1"/>
</dbReference>
<keyword id="KW-1185">Reference proteome</keyword>
<keyword id="KW-0687">Ribonucleoprotein</keyword>
<keyword id="KW-0689">Ribosomal protein</keyword>
<name>RL36_PORGI</name>
<organism>
    <name type="scientific">Porphyromonas gingivalis (strain ATCC BAA-308 / W83)</name>
    <dbReference type="NCBI Taxonomy" id="242619"/>
    <lineage>
        <taxon>Bacteria</taxon>
        <taxon>Pseudomonadati</taxon>
        <taxon>Bacteroidota</taxon>
        <taxon>Bacteroidia</taxon>
        <taxon>Bacteroidales</taxon>
        <taxon>Porphyromonadaceae</taxon>
        <taxon>Porphyromonas</taxon>
    </lineage>
</organism>
<evidence type="ECO:0000255" key="1">
    <source>
        <dbReference type="HAMAP-Rule" id="MF_00251"/>
    </source>
</evidence>
<evidence type="ECO:0000305" key="2"/>
<proteinExistence type="inferred from homology"/>
<accession>Q7MTN6</accession>